<evidence type="ECO:0000255" key="1">
    <source>
        <dbReference type="HAMAP-Rule" id="MF_00436"/>
    </source>
</evidence>
<evidence type="ECO:0000255" key="2">
    <source>
        <dbReference type="PROSITE-ProRule" id="PRU01346"/>
    </source>
</evidence>
<evidence type="ECO:0000256" key="3">
    <source>
        <dbReference type="SAM" id="MobiDB-lite"/>
    </source>
</evidence>
<name>HFQ_YERPG</name>
<sequence length="101" mass="11130">MAKGQSLQDPFLNALRRERVPVSIYLVNGIKLQGQVESFDQFVILLKNTVSQMVYKHAISTVVPSRPVSHHSNTPSGSTNNYHGSNPSAPQQPQQDSDDAE</sequence>
<proteinExistence type="inferred from homology"/>
<gene>
    <name evidence="1" type="primary">hfq</name>
    <name type="ordered locus">YpAngola_A0699</name>
</gene>
<reference key="1">
    <citation type="journal article" date="2010" name="J. Bacteriol.">
        <title>Genome sequence of the deep-rooted Yersinia pestis strain Angola reveals new insights into the evolution and pangenome of the plague bacterium.</title>
        <authorList>
            <person name="Eppinger M."/>
            <person name="Worsham P.L."/>
            <person name="Nikolich M.P."/>
            <person name="Riley D.R."/>
            <person name="Sebastian Y."/>
            <person name="Mou S."/>
            <person name="Achtman M."/>
            <person name="Lindler L.E."/>
            <person name="Ravel J."/>
        </authorList>
    </citation>
    <scope>NUCLEOTIDE SEQUENCE [LARGE SCALE GENOMIC DNA]</scope>
    <source>
        <strain>Angola</strain>
    </source>
</reference>
<comment type="function">
    <text evidence="1">RNA chaperone that binds small regulatory RNA (sRNAs) and mRNAs to facilitate mRNA translational regulation in response to envelope stress, environmental stress and changes in metabolite concentrations. Also binds with high specificity to tRNAs.</text>
</comment>
<comment type="subunit">
    <text evidence="1">Homohexamer.</text>
</comment>
<comment type="similarity">
    <text evidence="1">Belongs to the Hfq family.</text>
</comment>
<dbReference type="EMBL" id="CP000901">
    <property type="protein sequence ID" value="ABX86512.1"/>
    <property type="molecule type" value="Genomic_DNA"/>
</dbReference>
<dbReference type="RefSeq" id="WP_002209151.1">
    <property type="nucleotide sequence ID" value="NZ_CP009935.1"/>
</dbReference>
<dbReference type="SMR" id="A9QYN1"/>
<dbReference type="GeneID" id="58049160"/>
<dbReference type="KEGG" id="ypg:YpAngola_A0699"/>
<dbReference type="PATRIC" id="fig|349746.12.peg.1647"/>
<dbReference type="GO" id="GO:0005829">
    <property type="term" value="C:cytosol"/>
    <property type="evidence" value="ECO:0007669"/>
    <property type="project" value="TreeGrafter"/>
</dbReference>
<dbReference type="GO" id="GO:0003723">
    <property type="term" value="F:RNA binding"/>
    <property type="evidence" value="ECO:0007669"/>
    <property type="project" value="UniProtKB-UniRule"/>
</dbReference>
<dbReference type="GO" id="GO:0006355">
    <property type="term" value="P:regulation of DNA-templated transcription"/>
    <property type="evidence" value="ECO:0007669"/>
    <property type="project" value="InterPro"/>
</dbReference>
<dbReference type="GO" id="GO:0043487">
    <property type="term" value="P:regulation of RNA stability"/>
    <property type="evidence" value="ECO:0007669"/>
    <property type="project" value="TreeGrafter"/>
</dbReference>
<dbReference type="GO" id="GO:0045974">
    <property type="term" value="P:regulation of translation, ncRNA-mediated"/>
    <property type="evidence" value="ECO:0007669"/>
    <property type="project" value="TreeGrafter"/>
</dbReference>
<dbReference type="CDD" id="cd01716">
    <property type="entry name" value="Hfq"/>
    <property type="match status" value="1"/>
</dbReference>
<dbReference type="FunFam" id="2.30.30.100:FF:000001">
    <property type="entry name" value="RNA-binding protein Hfq"/>
    <property type="match status" value="1"/>
</dbReference>
<dbReference type="Gene3D" id="2.30.30.100">
    <property type="match status" value="1"/>
</dbReference>
<dbReference type="HAMAP" id="MF_00436">
    <property type="entry name" value="Hfq"/>
    <property type="match status" value="1"/>
</dbReference>
<dbReference type="InterPro" id="IPR005001">
    <property type="entry name" value="Hfq"/>
</dbReference>
<dbReference type="InterPro" id="IPR010920">
    <property type="entry name" value="LSM_dom_sf"/>
</dbReference>
<dbReference type="InterPro" id="IPR047575">
    <property type="entry name" value="Sm"/>
</dbReference>
<dbReference type="NCBIfam" id="TIGR02383">
    <property type="entry name" value="Hfq"/>
    <property type="match status" value="1"/>
</dbReference>
<dbReference type="NCBIfam" id="NF001602">
    <property type="entry name" value="PRK00395.1"/>
    <property type="match status" value="1"/>
</dbReference>
<dbReference type="PANTHER" id="PTHR34772">
    <property type="entry name" value="RNA-BINDING PROTEIN HFQ"/>
    <property type="match status" value="1"/>
</dbReference>
<dbReference type="PANTHER" id="PTHR34772:SF1">
    <property type="entry name" value="RNA-BINDING PROTEIN HFQ"/>
    <property type="match status" value="1"/>
</dbReference>
<dbReference type="Pfam" id="PF17209">
    <property type="entry name" value="Hfq"/>
    <property type="match status" value="1"/>
</dbReference>
<dbReference type="SUPFAM" id="SSF50182">
    <property type="entry name" value="Sm-like ribonucleoproteins"/>
    <property type="match status" value="1"/>
</dbReference>
<dbReference type="PROSITE" id="PS52002">
    <property type="entry name" value="SM"/>
    <property type="match status" value="1"/>
</dbReference>
<organism>
    <name type="scientific">Yersinia pestis bv. Antiqua (strain Angola)</name>
    <dbReference type="NCBI Taxonomy" id="349746"/>
    <lineage>
        <taxon>Bacteria</taxon>
        <taxon>Pseudomonadati</taxon>
        <taxon>Pseudomonadota</taxon>
        <taxon>Gammaproteobacteria</taxon>
        <taxon>Enterobacterales</taxon>
        <taxon>Yersiniaceae</taxon>
        <taxon>Yersinia</taxon>
    </lineage>
</organism>
<protein>
    <recommendedName>
        <fullName evidence="1">RNA-binding protein Hfq</fullName>
    </recommendedName>
</protein>
<feature type="chain" id="PRO_1000124435" description="RNA-binding protein Hfq">
    <location>
        <begin position="1"/>
        <end position="101"/>
    </location>
</feature>
<feature type="domain" description="Sm" evidence="2">
    <location>
        <begin position="9"/>
        <end position="68"/>
    </location>
</feature>
<feature type="region of interest" description="Disordered" evidence="3">
    <location>
        <begin position="63"/>
        <end position="101"/>
    </location>
</feature>
<feature type="compositionally biased region" description="Polar residues" evidence="3">
    <location>
        <begin position="70"/>
        <end position="86"/>
    </location>
</feature>
<accession>A9QYN1</accession>
<keyword id="KW-0694">RNA-binding</keyword>
<keyword id="KW-0346">Stress response</keyword>